<protein>
    <recommendedName>
        <fullName>Splicing factor U2AF 65 kDa subunit</fullName>
    </recommendedName>
    <alternativeName>
        <fullName>U2 auxiliary factor 65 kDa subunit</fullName>
        <shortName>hU2AF(65)</shortName>
        <shortName>hU2AF65</shortName>
    </alternativeName>
    <alternativeName>
        <fullName>U2 snRNP auxiliary factor large subunit</fullName>
    </alternativeName>
</protein>
<organism>
    <name type="scientific">Homo sapiens</name>
    <name type="common">Human</name>
    <dbReference type="NCBI Taxonomy" id="9606"/>
    <lineage>
        <taxon>Eukaryota</taxon>
        <taxon>Metazoa</taxon>
        <taxon>Chordata</taxon>
        <taxon>Craniata</taxon>
        <taxon>Vertebrata</taxon>
        <taxon>Euteleostomi</taxon>
        <taxon>Mammalia</taxon>
        <taxon>Eutheria</taxon>
        <taxon>Euarchontoglires</taxon>
        <taxon>Primates</taxon>
        <taxon>Haplorrhini</taxon>
        <taxon>Catarrhini</taxon>
        <taxon>Hominidae</taxon>
        <taxon>Homo</taxon>
    </lineage>
</organism>
<name>U2AF2_HUMAN</name>
<sequence length="475" mass="53501">MSDFDEFERQLNENKQERDKENRHRKRSHSRSRSRDRKRRSRSRDRRNRDQRSASRDRRRRSKPLTRGAKEEHGGLIRSPRHEKKKKVRKYWDVPPPGFEHITPMQYKAMQAAGQIPATALLPTMTPDGLAVTPTPVPVVGSQMTRQARRLYVGNIPFGITEEAMMDFFNAQMRLGGLTQAPGNPVLAVQINQDKNFAFLEFRSVDETTQAMAFDGIIFQGQSLKIRRPHDYQPLPGMSENPSVYVPGVVSTVVPDSAHKLFIGGLPNYLNDDQVKELLTSFGPLKAFNLVKDSATGLSKGYAFCEYVDINVTDQAIAGLNGMQLGDKKLLVQRASVGAKNATLVSPPSTINQTPVTLQVPGLMSSQVQMGGHPTEVLCLMNMVLPEELLDDEEYEEIVEDVRDECSKYGLVKSIEIPRPVDGVEVPGCGKIFVEFTSVFDCQKAMQGLTGRKFANRVVVTKYCDPDSYHRRDFW</sequence>
<keyword id="KW-0002">3D-structure</keyword>
<keyword id="KW-0007">Acetylation</keyword>
<keyword id="KW-0025">Alternative splicing</keyword>
<keyword id="KW-0903">Direct protein sequencing</keyword>
<keyword id="KW-0225">Disease variant</keyword>
<keyword id="KW-0379">Hydroxylation</keyword>
<keyword id="KW-0991">Intellectual disability</keyword>
<keyword id="KW-1017">Isopeptide bond</keyword>
<keyword id="KW-0507">mRNA processing</keyword>
<keyword id="KW-0508">mRNA splicing</keyword>
<keyword id="KW-0539">Nucleus</keyword>
<keyword id="KW-0597">Phosphoprotein</keyword>
<keyword id="KW-1267">Proteomics identification</keyword>
<keyword id="KW-1185">Reference proteome</keyword>
<keyword id="KW-0677">Repeat</keyword>
<keyword id="KW-0678">Repressor</keyword>
<keyword id="KW-0694">RNA-binding</keyword>
<keyword id="KW-0747">Spliceosome</keyword>
<keyword id="KW-0832">Ubl conjugation</keyword>
<feature type="initiator methionine" description="Removed" evidence="23 27 29 31 32">
    <location>
        <position position="1"/>
    </location>
</feature>
<feature type="chain" id="PRO_0000081988" description="Splicing factor U2AF 65 kDa subunit">
    <location>
        <begin position="2"/>
        <end position="475"/>
    </location>
</feature>
<feature type="domain" description="RRM 1" evidence="2">
    <location>
        <begin position="149"/>
        <end position="231"/>
    </location>
</feature>
<feature type="domain" description="RRM 2" evidence="2">
    <location>
        <begin position="259"/>
        <end position="337"/>
    </location>
</feature>
<feature type="domain" description="RRM 3" evidence="2">
    <location>
        <begin position="385"/>
        <end position="466"/>
    </location>
</feature>
<feature type="region of interest" description="Disordered" evidence="3">
    <location>
        <begin position="1"/>
        <end position="90"/>
    </location>
</feature>
<feature type="region of interest" description="Required for interaction with PRPF19" evidence="15">
    <location>
        <begin position="2"/>
        <end position="93"/>
    </location>
</feature>
<feature type="region of interest" description="Necessary and sufficient to stimulate pre-mRNAs 3'-end cleavage in a CFIm complex-dependent manner" evidence="9">
    <location>
        <begin position="17"/>
        <end position="47"/>
    </location>
</feature>
<feature type="compositionally biased region" description="Basic and acidic residues" evidence="3">
    <location>
        <begin position="7"/>
        <end position="22"/>
    </location>
</feature>
<feature type="compositionally biased region" description="Basic residues" evidence="3">
    <location>
        <begin position="23"/>
        <end position="46"/>
    </location>
</feature>
<feature type="compositionally biased region" description="Basic and acidic residues" evidence="3">
    <location>
        <begin position="47"/>
        <end position="56"/>
    </location>
</feature>
<feature type="compositionally biased region" description="Basic residues" evidence="3">
    <location>
        <begin position="79"/>
        <end position="89"/>
    </location>
</feature>
<feature type="modified residue" description="N-acetylserine" evidence="23 27 29 31 32">
    <location>
        <position position="2"/>
    </location>
</feature>
<feature type="modified residue" description="Phosphoserine" evidence="26 29 30 33">
    <location>
        <position position="2"/>
    </location>
</feature>
<feature type="modified residue" description="5-hydroxylysine; by JMJD6; alternate" evidence="12">
    <location>
        <position position="15"/>
    </location>
</feature>
<feature type="modified residue" description="N6-acetyllysine; alternate" evidence="28">
    <location>
        <position position="70"/>
    </location>
</feature>
<feature type="modified residue" description="Phosphoserine" evidence="29 33 34">
    <location>
        <position position="79"/>
    </location>
</feature>
<feature type="modified residue" description="5-hydroxylysine; by JMJD6" evidence="12">
    <location>
        <position position="276"/>
    </location>
</feature>
<feature type="modified residue" description="Phosphoserine" evidence="33">
    <location>
        <position position="294"/>
    </location>
</feature>
<feature type="cross-link" description="Glycyl lysine isopeptide (Lys-Gly) (interchain with G-Cter in SUMO2); alternate" evidence="36">
    <location>
        <position position="15"/>
    </location>
</feature>
<feature type="cross-link" description="Glycyl lysine isopeptide (Lys-Gly) (interchain with G-Cter in SUMO2); alternate" evidence="35 36">
    <location>
        <position position="70"/>
    </location>
</feature>
<feature type="splice variant" id="VSP_035414" description="In isoform 2." evidence="24">
    <location>
        <begin position="345"/>
        <end position="348"/>
    </location>
</feature>
<feature type="sequence variant" id="VAR_089085" description="In DEVDFB; likely pathogenic; dbSNP:rs1600073584." evidence="18 20">
    <original>R</original>
    <variation>W</variation>
    <location>
        <position position="149"/>
    </location>
</feature>
<feature type="mutagenesis site" description="Decreases affinity for UAF1 by 3 orders of magnitude." evidence="5">
    <original>W</original>
    <variation>A</variation>
    <location>
        <position position="92"/>
    </location>
</feature>
<feature type="mutagenesis site" description="Decreases affinity for UAF1 by 2 orders of magnitude." evidence="5">
    <original>P</original>
    <variation>G</variation>
    <location>
        <position position="96"/>
    </location>
</feature>
<feature type="mutagenesis site" description="Decreases affinity for UAF1 by 2 orders of magnitude." evidence="5">
    <original>P</original>
    <variation>G</variation>
    <location>
        <position position="104"/>
    </location>
</feature>
<feature type="mutagenesis site" description="Reduces interaction with SF1." evidence="7">
    <original>EE</original>
    <variation>RR</variation>
    <location>
        <begin position="387"/>
        <end position="388"/>
    </location>
</feature>
<feature type="mutagenesis site" description="Reduces interaction with SF1.">
    <original>DDEE</original>
    <variation>AAAA</variation>
    <location>
        <begin position="391"/>
        <end position="394"/>
    </location>
</feature>
<feature type="mutagenesis site" description="Reduces interaction with SF1.">
    <original>DDEE</original>
    <variation>RRKK</variation>
    <location>
        <begin position="391"/>
        <end position="394"/>
    </location>
</feature>
<feature type="mutagenesis site" description="No effect." evidence="7">
    <original>EE</original>
    <variation>AA</variation>
    <location>
        <begin position="396"/>
        <end position="397"/>
    </location>
</feature>
<feature type="mutagenesis site" description="Reduces interaction with SF1." evidence="7">
    <original>EE</original>
    <variation>GA</variation>
    <location>
        <begin position="396"/>
        <end position="397"/>
    </location>
</feature>
<feature type="mutagenesis site" description="Reduces interaction with SF1." evidence="7">
    <original>EE</original>
    <variation>KK</variation>
    <location>
        <begin position="396"/>
        <end position="397"/>
    </location>
</feature>
<feature type="mutagenesis site" description="Reduces interaction with SF1." evidence="7">
    <original>F</original>
    <variation>A</variation>
    <location>
        <position position="454"/>
    </location>
</feature>
<feature type="helix" evidence="37">
    <location>
        <begin position="104"/>
        <end position="109"/>
    </location>
</feature>
<feature type="helix" evidence="47">
    <location>
        <begin position="143"/>
        <end position="149"/>
    </location>
</feature>
<feature type="strand" evidence="44">
    <location>
        <begin position="150"/>
        <end position="155"/>
    </location>
</feature>
<feature type="helix" evidence="44">
    <location>
        <begin position="162"/>
        <end position="175"/>
    </location>
</feature>
<feature type="strand" evidence="44">
    <location>
        <begin position="180"/>
        <end position="183"/>
    </location>
</feature>
<feature type="strand" evidence="44">
    <location>
        <begin position="185"/>
        <end position="191"/>
    </location>
</feature>
<feature type="turn" evidence="50">
    <location>
        <begin position="193"/>
        <end position="196"/>
    </location>
</feature>
<feature type="strand" evidence="44">
    <location>
        <begin position="197"/>
        <end position="203"/>
    </location>
</feature>
<feature type="helix" evidence="44">
    <location>
        <begin position="205"/>
        <end position="211"/>
    </location>
</feature>
<feature type="helix" evidence="44">
    <location>
        <begin position="212"/>
        <end position="214"/>
    </location>
</feature>
<feature type="strand" evidence="39">
    <location>
        <begin position="219"/>
        <end position="222"/>
    </location>
</feature>
<feature type="strand" evidence="44">
    <location>
        <begin position="225"/>
        <end position="227"/>
    </location>
</feature>
<feature type="strand" evidence="41">
    <location>
        <begin position="238"/>
        <end position="240"/>
    </location>
</feature>
<feature type="strand" evidence="42">
    <location>
        <begin position="244"/>
        <end position="246"/>
    </location>
</feature>
<feature type="strand" evidence="49">
    <location>
        <begin position="250"/>
        <end position="253"/>
    </location>
</feature>
<feature type="strand" evidence="45">
    <location>
        <begin position="260"/>
        <end position="264"/>
    </location>
</feature>
<feature type="helix" evidence="45">
    <location>
        <begin position="272"/>
        <end position="280"/>
    </location>
</feature>
<feature type="strand" evidence="40">
    <location>
        <begin position="281"/>
        <end position="283"/>
    </location>
</feature>
<feature type="strand" evidence="45">
    <location>
        <begin position="285"/>
        <end position="292"/>
    </location>
</feature>
<feature type="turn" evidence="45">
    <location>
        <begin position="294"/>
        <end position="296"/>
    </location>
</feature>
<feature type="strand" evidence="45">
    <location>
        <begin position="299"/>
        <end position="308"/>
    </location>
</feature>
<feature type="helix" evidence="45">
    <location>
        <begin position="310"/>
        <end position="320"/>
    </location>
</feature>
<feature type="strand" evidence="46">
    <location>
        <begin position="323"/>
        <end position="325"/>
    </location>
</feature>
<feature type="strand" evidence="40">
    <location>
        <begin position="326"/>
        <end position="328"/>
    </location>
</feature>
<feature type="strand" evidence="45">
    <location>
        <begin position="331"/>
        <end position="334"/>
    </location>
</feature>
<feature type="helix" evidence="47">
    <location>
        <begin position="335"/>
        <end position="338"/>
    </location>
</feature>
<feature type="strand" evidence="48">
    <location>
        <begin position="376"/>
        <end position="383"/>
    </location>
</feature>
<feature type="helix" evidence="48">
    <location>
        <begin position="386"/>
        <end position="389"/>
    </location>
</feature>
<feature type="helix" evidence="48">
    <location>
        <begin position="392"/>
        <end position="406"/>
    </location>
</feature>
<feature type="turn" evidence="48">
    <location>
        <begin position="407"/>
        <end position="409"/>
    </location>
</feature>
<feature type="strand" evidence="48">
    <location>
        <begin position="412"/>
        <end position="416"/>
    </location>
</feature>
<feature type="turn" evidence="43">
    <location>
        <begin position="422"/>
        <end position="424"/>
    </location>
</feature>
<feature type="turn" evidence="48">
    <location>
        <begin position="427"/>
        <end position="430"/>
    </location>
</feature>
<feature type="strand" evidence="48">
    <location>
        <begin position="432"/>
        <end position="438"/>
    </location>
</feature>
<feature type="helix" evidence="48">
    <location>
        <begin position="439"/>
        <end position="449"/>
    </location>
</feature>
<feature type="strand" evidence="38">
    <location>
        <begin position="454"/>
        <end position="457"/>
    </location>
</feature>
<feature type="strand" evidence="48">
    <location>
        <begin position="460"/>
        <end position="464"/>
    </location>
</feature>
<feature type="helix" evidence="48">
    <location>
        <begin position="466"/>
        <end position="471"/>
    </location>
</feature>
<gene>
    <name type="primary">U2AF2</name>
    <name type="synonym">U2AF65</name>
</gene>
<accession>P26368</accession>
<accession>Q96HC5</accession>
<dbReference type="EMBL" id="X64044">
    <property type="protein sequence ID" value="CAA45409.1"/>
    <property type="molecule type" value="mRNA"/>
</dbReference>
<dbReference type="EMBL" id="CH471135">
    <property type="protein sequence ID" value="EAW72404.1"/>
    <property type="molecule type" value="Genomic_DNA"/>
</dbReference>
<dbReference type="EMBL" id="BC008740">
    <property type="protein sequence ID" value="AAH08740.1"/>
    <property type="molecule type" value="mRNA"/>
</dbReference>
<dbReference type="EMBL" id="BC030574">
    <property type="protein sequence ID" value="AAH30574.1"/>
    <property type="molecule type" value="mRNA"/>
</dbReference>
<dbReference type="CCDS" id="CCDS12933.1">
    <molecule id="P26368-1"/>
</dbReference>
<dbReference type="CCDS" id="CCDS46197.1">
    <molecule id="P26368-2"/>
</dbReference>
<dbReference type="PIR" id="S20250">
    <property type="entry name" value="S20250"/>
</dbReference>
<dbReference type="RefSeq" id="NP_001012496.1">
    <molecule id="P26368-2"/>
    <property type="nucleotide sequence ID" value="NM_001012478.2"/>
</dbReference>
<dbReference type="RefSeq" id="NP_009210.1">
    <molecule id="P26368-1"/>
    <property type="nucleotide sequence ID" value="NM_007279.3"/>
</dbReference>
<dbReference type="PDB" id="1JMT">
    <property type="method" value="X-ray"/>
    <property type="resolution" value="2.20 A"/>
    <property type="chains" value="B=85-112"/>
</dbReference>
<dbReference type="PDB" id="1O0P">
    <property type="method" value="NMR"/>
    <property type="chains" value="A=372-475"/>
</dbReference>
<dbReference type="PDB" id="1OPI">
    <property type="method" value="NMR"/>
    <property type="chains" value="A=372-475"/>
</dbReference>
<dbReference type="PDB" id="1U2F">
    <property type="method" value="NMR"/>
    <property type="chains" value="A=148-237"/>
</dbReference>
<dbReference type="PDB" id="2G4B">
    <property type="method" value="X-ray"/>
    <property type="resolution" value="2.50 A"/>
    <property type="chains" value="A=148-336"/>
</dbReference>
<dbReference type="PDB" id="2HZC">
    <property type="method" value="X-ray"/>
    <property type="resolution" value="1.47 A"/>
    <property type="chains" value="A=148-229"/>
</dbReference>
<dbReference type="PDB" id="2M0G">
    <property type="method" value="NMR"/>
    <property type="chains" value="B=372-475"/>
</dbReference>
<dbReference type="PDB" id="2U2F">
    <property type="method" value="NMR"/>
    <property type="chains" value="A=258-342"/>
</dbReference>
<dbReference type="PDB" id="2YH0">
    <property type="method" value="NMR"/>
    <property type="chains" value="A=148-342"/>
</dbReference>
<dbReference type="PDB" id="2YH1">
    <property type="method" value="NMR"/>
    <property type="chains" value="A=148-342"/>
</dbReference>
<dbReference type="PDB" id="3VAF">
    <property type="method" value="X-ray"/>
    <property type="resolution" value="2.49 A"/>
    <property type="chains" value="A/B=148-336"/>
</dbReference>
<dbReference type="PDB" id="3VAG">
    <property type="method" value="X-ray"/>
    <property type="resolution" value="2.19 A"/>
    <property type="chains" value="A/B=148-336"/>
</dbReference>
<dbReference type="PDB" id="3VAH">
    <property type="method" value="X-ray"/>
    <property type="resolution" value="2.50 A"/>
    <property type="chains" value="A/B=148-336"/>
</dbReference>
<dbReference type="PDB" id="3VAI">
    <property type="method" value="X-ray"/>
    <property type="resolution" value="2.20 A"/>
    <property type="chains" value="A/B=148-336"/>
</dbReference>
<dbReference type="PDB" id="3VAJ">
    <property type="method" value="X-ray"/>
    <property type="resolution" value="1.90 A"/>
    <property type="chains" value="A/B=148-336"/>
</dbReference>
<dbReference type="PDB" id="3VAK">
    <property type="method" value="X-ray"/>
    <property type="resolution" value="2.17 A"/>
    <property type="chains" value="A/B=148-336"/>
</dbReference>
<dbReference type="PDB" id="3VAL">
    <property type="method" value="X-ray"/>
    <property type="resolution" value="2.50 A"/>
    <property type="chains" value="A/B/D/I=148-336"/>
</dbReference>
<dbReference type="PDB" id="3VAM">
    <property type="method" value="X-ray"/>
    <property type="resolution" value="2.40 A"/>
    <property type="chains" value="A/B=148-336"/>
</dbReference>
<dbReference type="PDB" id="4FXW">
    <property type="method" value="X-ray"/>
    <property type="resolution" value="2.29 A"/>
    <property type="chains" value="A/C=375-475"/>
</dbReference>
<dbReference type="PDB" id="4TU7">
    <property type="method" value="X-ray"/>
    <property type="resolution" value="2.09 A"/>
    <property type="chains" value="A/B=148-336"/>
</dbReference>
<dbReference type="PDB" id="4TU8">
    <property type="method" value="X-ray"/>
    <property type="resolution" value="1.92 A"/>
    <property type="chains" value="A/B=148-336"/>
</dbReference>
<dbReference type="PDB" id="4TU9">
    <property type="method" value="X-ray"/>
    <property type="resolution" value="1.99 A"/>
    <property type="chains" value="A/B=148-336"/>
</dbReference>
<dbReference type="PDB" id="5EV1">
    <property type="method" value="X-ray"/>
    <property type="resolution" value="2.04 A"/>
    <property type="chains" value="A=141-341"/>
</dbReference>
<dbReference type="PDB" id="5EV2">
    <property type="method" value="X-ray"/>
    <property type="resolution" value="1.86 A"/>
    <property type="chains" value="A=141-341"/>
</dbReference>
<dbReference type="PDB" id="5EV3">
    <property type="method" value="X-ray"/>
    <property type="resolution" value="1.50 A"/>
    <property type="chains" value="A=141-341"/>
</dbReference>
<dbReference type="PDB" id="5EV4">
    <property type="method" value="X-ray"/>
    <property type="resolution" value="1.57 A"/>
    <property type="chains" value="A=141-341"/>
</dbReference>
<dbReference type="PDB" id="5W0G">
    <property type="method" value="X-ray"/>
    <property type="resolution" value="1.07 A"/>
    <property type="chains" value="A=148-229"/>
</dbReference>
<dbReference type="PDB" id="5W0H">
    <property type="method" value="X-ray"/>
    <property type="resolution" value="1.11 A"/>
    <property type="chains" value="A=258-336"/>
</dbReference>
<dbReference type="PDB" id="6TR0">
    <property type="method" value="NMR"/>
    <property type="chains" value="A=140-342"/>
</dbReference>
<dbReference type="PDB" id="6XLV">
    <property type="method" value="X-ray"/>
    <property type="resolution" value="1.40 A"/>
    <property type="chains" value="A=141-341"/>
</dbReference>
<dbReference type="PDB" id="6XLW">
    <property type="method" value="X-ray"/>
    <property type="resolution" value="1.50 A"/>
    <property type="chains" value="A=141-341"/>
</dbReference>
<dbReference type="PDB" id="6XLX">
    <property type="method" value="X-ray"/>
    <property type="resolution" value="1.70 A"/>
    <property type="chains" value="A=141-341"/>
</dbReference>
<dbReference type="PDB" id="7S3A">
    <property type="method" value="X-ray"/>
    <property type="resolution" value="1.48 A"/>
    <property type="chains" value="A=141-341"/>
</dbReference>
<dbReference type="PDB" id="7S3B">
    <property type="method" value="X-ray"/>
    <property type="resolution" value="1.89 A"/>
    <property type="chains" value="A=141-341"/>
</dbReference>
<dbReference type="PDB" id="7S3C">
    <property type="method" value="X-ray"/>
    <property type="resolution" value="1.51 A"/>
    <property type="chains" value="A=141-341"/>
</dbReference>
<dbReference type="PDB" id="7SN6">
    <property type="method" value="X-ray"/>
    <property type="resolution" value="1.80 A"/>
    <property type="chains" value="A/B=375-475"/>
</dbReference>
<dbReference type="PDB" id="8P25">
    <property type="method" value="NMR"/>
    <property type="chains" value="A=231-342"/>
</dbReference>
<dbReference type="PDB" id="9C7A">
    <property type="method" value="X-ray"/>
    <property type="resolution" value="1.40 A"/>
    <property type="chains" value="A=141-341"/>
</dbReference>
<dbReference type="PDB" id="9C7B">
    <property type="method" value="X-ray"/>
    <property type="resolution" value="1.40 A"/>
    <property type="chains" value="A=141-341"/>
</dbReference>
<dbReference type="PDB" id="9DWU">
    <property type="method" value="EM"/>
    <property type="resolution" value="5.14 A"/>
    <property type="chains" value="C=257-336"/>
</dbReference>
<dbReference type="PDBsum" id="1JMT"/>
<dbReference type="PDBsum" id="1O0P"/>
<dbReference type="PDBsum" id="1OPI"/>
<dbReference type="PDBsum" id="1U2F"/>
<dbReference type="PDBsum" id="2G4B"/>
<dbReference type="PDBsum" id="2HZC"/>
<dbReference type="PDBsum" id="2M0G"/>
<dbReference type="PDBsum" id="2U2F"/>
<dbReference type="PDBsum" id="2YH0"/>
<dbReference type="PDBsum" id="2YH1"/>
<dbReference type="PDBsum" id="3VAF"/>
<dbReference type="PDBsum" id="3VAG"/>
<dbReference type="PDBsum" id="3VAH"/>
<dbReference type="PDBsum" id="3VAI"/>
<dbReference type="PDBsum" id="3VAJ"/>
<dbReference type="PDBsum" id="3VAK"/>
<dbReference type="PDBsum" id="3VAL"/>
<dbReference type="PDBsum" id="3VAM"/>
<dbReference type="PDBsum" id="4FXW"/>
<dbReference type="PDBsum" id="4TU7"/>
<dbReference type="PDBsum" id="4TU8"/>
<dbReference type="PDBsum" id="4TU9"/>
<dbReference type="PDBsum" id="5EV1"/>
<dbReference type="PDBsum" id="5EV2"/>
<dbReference type="PDBsum" id="5EV3"/>
<dbReference type="PDBsum" id="5EV4"/>
<dbReference type="PDBsum" id="5W0G"/>
<dbReference type="PDBsum" id="5W0H"/>
<dbReference type="PDBsum" id="6TR0"/>
<dbReference type="PDBsum" id="6XLV"/>
<dbReference type="PDBsum" id="6XLW"/>
<dbReference type="PDBsum" id="6XLX"/>
<dbReference type="PDBsum" id="7S3A"/>
<dbReference type="PDBsum" id="7S3B"/>
<dbReference type="PDBsum" id="7S3C"/>
<dbReference type="PDBsum" id="7SN6"/>
<dbReference type="PDBsum" id="8P25"/>
<dbReference type="PDBsum" id="9C7A"/>
<dbReference type="PDBsum" id="9C7B"/>
<dbReference type="PDBsum" id="9DWU"/>
<dbReference type="BMRB" id="P26368"/>
<dbReference type="EMDB" id="EMD-47265"/>
<dbReference type="SMR" id="P26368"/>
<dbReference type="BioGRID" id="116466">
    <property type="interactions" value="647"/>
</dbReference>
<dbReference type="ComplexPortal" id="CPX-1074">
    <property type="entry name" value="SF1-U2AF65 splicing factor complex"/>
</dbReference>
<dbReference type="ComplexPortal" id="CPX-1921">
    <property type="entry name" value="U2 small nuclear ribonucleoprotein auxiliary factor complex"/>
</dbReference>
<dbReference type="CORUM" id="P26368"/>
<dbReference type="DIP" id="DIP-2154N"/>
<dbReference type="FunCoup" id="P26368">
    <property type="interactions" value="3675"/>
</dbReference>
<dbReference type="IntAct" id="P26368">
    <property type="interactions" value="385"/>
</dbReference>
<dbReference type="MINT" id="P26368"/>
<dbReference type="STRING" id="9606.ENSP00000307863"/>
<dbReference type="GlyGen" id="P26368">
    <property type="glycosylation" value="3 sites, 1 O-linked glycan (1 site)"/>
</dbReference>
<dbReference type="iPTMnet" id="P26368"/>
<dbReference type="PhosphoSitePlus" id="P26368"/>
<dbReference type="SwissPalm" id="P26368"/>
<dbReference type="BioMuta" id="U2AF2"/>
<dbReference type="DMDM" id="267188"/>
<dbReference type="jPOST" id="P26368"/>
<dbReference type="MassIVE" id="P26368"/>
<dbReference type="PaxDb" id="9606-ENSP00000307863"/>
<dbReference type="PeptideAtlas" id="P26368"/>
<dbReference type="ProteomicsDB" id="54325">
    <molecule id="P26368-1"/>
</dbReference>
<dbReference type="ProteomicsDB" id="54326">
    <molecule id="P26368-2"/>
</dbReference>
<dbReference type="Pumba" id="P26368"/>
<dbReference type="TopDownProteomics" id="P26368-1">
    <molecule id="P26368-1"/>
</dbReference>
<dbReference type="TopDownProteomics" id="P26368-2">
    <molecule id="P26368-2"/>
</dbReference>
<dbReference type="Antibodypedia" id="4399">
    <property type="antibodies" value="275 antibodies from 27 providers"/>
</dbReference>
<dbReference type="DNASU" id="11338"/>
<dbReference type="Ensembl" id="ENST00000308924.9">
    <molecule id="P26368-1"/>
    <property type="protein sequence ID" value="ENSP00000307863.3"/>
    <property type="gene ID" value="ENSG00000063244.14"/>
</dbReference>
<dbReference type="Ensembl" id="ENST00000450554.6">
    <molecule id="P26368-2"/>
    <property type="protein sequence ID" value="ENSP00000388475.1"/>
    <property type="gene ID" value="ENSG00000063244.14"/>
</dbReference>
<dbReference type="GeneID" id="11338"/>
<dbReference type="KEGG" id="hsa:11338"/>
<dbReference type="MANE-Select" id="ENST00000308924.9">
    <property type="protein sequence ID" value="ENSP00000307863.3"/>
    <property type="RefSeq nucleotide sequence ID" value="NM_007279.3"/>
    <property type="RefSeq protein sequence ID" value="NP_009210.1"/>
</dbReference>
<dbReference type="UCSC" id="uc002qlt.4">
    <molecule id="P26368-1"/>
    <property type="organism name" value="human"/>
</dbReference>
<dbReference type="AGR" id="HGNC:23156"/>
<dbReference type="CTD" id="11338"/>
<dbReference type="DisGeNET" id="11338"/>
<dbReference type="GeneCards" id="U2AF2"/>
<dbReference type="HGNC" id="HGNC:23156">
    <property type="gene designation" value="U2AF2"/>
</dbReference>
<dbReference type="HPA" id="ENSG00000063244">
    <property type="expression patterns" value="Low tissue specificity"/>
</dbReference>
<dbReference type="MalaCards" id="U2AF2"/>
<dbReference type="MIM" id="191318">
    <property type="type" value="gene"/>
</dbReference>
<dbReference type="MIM" id="620535">
    <property type="type" value="phenotype"/>
</dbReference>
<dbReference type="neXtProt" id="NX_P26368"/>
<dbReference type="OpenTargets" id="ENSG00000063244"/>
<dbReference type="PharmGKB" id="PA134908683"/>
<dbReference type="VEuPathDB" id="HostDB:ENSG00000063244"/>
<dbReference type="eggNOG" id="KOG0120">
    <property type="taxonomic scope" value="Eukaryota"/>
</dbReference>
<dbReference type="GeneTree" id="ENSGT00940000155556"/>
<dbReference type="InParanoid" id="P26368"/>
<dbReference type="OMA" id="MTQWDIK"/>
<dbReference type="OrthoDB" id="10266058at2759"/>
<dbReference type="PAN-GO" id="P26368">
    <property type="GO annotations" value="6 GO annotations based on evolutionary models"/>
</dbReference>
<dbReference type="PhylomeDB" id="P26368"/>
<dbReference type="TreeFam" id="TF314111"/>
<dbReference type="PathwayCommons" id="P26368"/>
<dbReference type="Reactome" id="R-HSA-159236">
    <property type="pathway name" value="Transport of Mature mRNA derived from an Intron-Containing Transcript"/>
</dbReference>
<dbReference type="Reactome" id="R-HSA-72163">
    <property type="pathway name" value="mRNA Splicing - Major Pathway"/>
</dbReference>
<dbReference type="Reactome" id="R-HSA-72187">
    <property type="pathway name" value="mRNA 3'-end processing"/>
</dbReference>
<dbReference type="Reactome" id="R-HSA-73856">
    <property type="pathway name" value="RNA Polymerase II Transcription Termination"/>
</dbReference>
<dbReference type="Reactome" id="R-HSA-9629569">
    <property type="pathway name" value="Protein hydroxylation"/>
</dbReference>
<dbReference type="SignaLink" id="P26368"/>
<dbReference type="SIGNOR" id="P26368"/>
<dbReference type="BioGRID-ORCS" id="11338">
    <property type="hits" value="834 hits in 1173 CRISPR screens"/>
</dbReference>
<dbReference type="CD-CODE" id="232F8A39">
    <property type="entry name" value="P-body"/>
</dbReference>
<dbReference type="CD-CODE" id="804901D1">
    <property type="entry name" value="Nuclear speckle"/>
</dbReference>
<dbReference type="CD-CODE" id="91857CE7">
    <property type="entry name" value="Nucleolus"/>
</dbReference>
<dbReference type="CD-CODE" id="C1EEEEF5">
    <property type="entry name" value="Synthetic Condensate 000309"/>
</dbReference>
<dbReference type="ChiTaRS" id="U2AF2">
    <property type="organism name" value="human"/>
</dbReference>
<dbReference type="EvolutionaryTrace" id="P26368"/>
<dbReference type="GeneWiki" id="U2AF2"/>
<dbReference type="GenomeRNAi" id="11338"/>
<dbReference type="Pharos" id="P26368">
    <property type="development level" value="Tbio"/>
</dbReference>
<dbReference type="PRO" id="PR:P26368"/>
<dbReference type="Proteomes" id="UP000005640">
    <property type="component" value="Chromosome 19"/>
</dbReference>
<dbReference type="RNAct" id="P26368">
    <property type="molecule type" value="protein"/>
</dbReference>
<dbReference type="Bgee" id="ENSG00000063244">
    <property type="expression patterns" value="Expressed in right uterine tube and 200 other cell types or tissues"/>
</dbReference>
<dbReference type="ExpressionAtlas" id="P26368">
    <property type="expression patterns" value="baseline and differential"/>
</dbReference>
<dbReference type="GO" id="GO:0000243">
    <property type="term" value="C:commitment complex"/>
    <property type="evidence" value="ECO:0000318"/>
    <property type="project" value="GO_Central"/>
</dbReference>
<dbReference type="GO" id="GO:0016607">
    <property type="term" value="C:nuclear speck"/>
    <property type="evidence" value="ECO:0000314"/>
    <property type="project" value="HPA"/>
</dbReference>
<dbReference type="GO" id="GO:0005654">
    <property type="term" value="C:nucleoplasm"/>
    <property type="evidence" value="ECO:0000304"/>
    <property type="project" value="Reactome"/>
</dbReference>
<dbReference type="GO" id="GO:0005634">
    <property type="term" value="C:nucleus"/>
    <property type="evidence" value="ECO:0000314"/>
    <property type="project" value="GO_Central"/>
</dbReference>
<dbReference type="GO" id="GO:0005681">
    <property type="term" value="C:spliceosomal complex"/>
    <property type="evidence" value="ECO:0000314"/>
    <property type="project" value="HGNC-UCL"/>
</dbReference>
<dbReference type="GO" id="GO:0071004">
    <property type="term" value="C:U2-type prespliceosome"/>
    <property type="evidence" value="ECO:0000314"/>
    <property type="project" value="GO_Central"/>
</dbReference>
<dbReference type="GO" id="GO:0089701">
    <property type="term" value="C:U2AF complex"/>
    <property type="evidence" value="ECO:0000314"/>
    <property type="project" value="GO_Central"/>
</dbReference>
<dbReference type="GO" id="GO:0070742">
    <property type="term" value="F:C2H2 zinc finger domain binding"/>
    <property type="evidence" value="ECO:0007669"/>
    <property type="project" value="Ensembl"/>
</dbReference>
<dbReference type="GO" id="GO:0019899">
    <property type="term" value="F:enzyme binding"/>
    <property type="evidence" value="ECO:0000353"/>
    <property type="project" value="UniProtKB"/>
</dbReference>
<dbReference type="GO" id="GO:0140678">
    <property type="term" value="F:molecular function inhibitor activity"/>
    <property type="evidence" value="ECO:0000269"/>
    <property type="project" value="DisProt"/>
</dbReference>
<dbReference type="GO" id="GO:0008187">
    <property type="term" value="F:poly-pyrimidine tract binding"/>
    <property type="evidence" value="ECO:0000318"/>
    <property type="project" value="GO_Central"/>
</dbReference>
<dbReference type="GO" id="GO:0030628">
    <property type="term" value="F:pre-mRNA 3'-splice site binding"/>
    <property type="evidence" value="ECO:0000314"/>
    <property type="project" value="GO_Central"/>
</dbReference>
<dbReference type="GO" id="GO:0003723">
    <property type="term" value="F:RNA binding"/>
    <property type="evidence" value="ECO:0007005"/>
    <property type="project" value="UniProtKB"/>
</dbReference>
<dbReference type="GO" id="GO:0006397">
    <property type="term" value="P:mRNA processing"/>
    <property type="evidence" value="ECO:0000304"/>
    <property type="project" value="ProtInc"/>
</dbReference>
<dbReference type="GO" id="GO:0000398">
    <property type="term" value="P:mRNA splicing, via spliceosome"/>
    <property type="evidence" value="ECO:0000314"/>
    <property type="project" value="GO_Central"/>
</dbReference>
<dbReference type="GO" id="GO:0048025">
    <property type="term" value="P:negative regulation of mRNA splicing, via spliceosome"/>
    <property type="evidence" value="ECO:0000314"/>
    <property type="project" value="UniProtKB"/>
</dbReference>
<dbReference type="GO" id="GO:0031397">
    <property type="term" value="P:negative regulation of protein ubiquitination"/>
    <property type="evidence" value="ECO:0000314"/>
    <property type="project" value="BHF-UCL"/>
</dbReference>
<dbReference type="GO" id="GO:0033120">
    <property type="term" value="P:positive regulation of RNA splicing"/>
    <property type="evidence" value="ECO:0000314"/>
    <property type="project" value="UniProtKB"/>
</dbReference>
<dbReference type="GO" id="GO:0000245">
    <property type="term" value="P:spliceosomal complex assembly"/>
    <property type="evidence" value="ECO:0000318"/>
    <property type="project" value="GO_Central"/>
</dbReference>
<dbReference type="CDD" id="cd12230">
    <property type="entry name" value="RRM1_U2AF65"/>
    <property type="match status" value="1"/>
</dbReference>
<dbReference type="CDD" id="cd12231">
    <property type="entry name" value="RRM2_U2AF65"/>
    <property type="match status" value="1"/>
</dbReference>
<dbReference type="CDD" id="cd12232">
    <property type="entry name" value="RRM3_U2AF65"/>
    <property type="match status" value="1"/>
</dbReference>
<dbReference type="DisProt" id="DP02921"/>
<dbReference type="FunFam" id="3.30.70.330:FF:000074">
    <property type="entry name" value="U2 snRNP auxiliary factor large subunit"/>
    <property type="match status" value="1"/>
</dbReference>
<dbReference type="FunFam" id="3.30.70.330:FF:000097">
    <property type="entry name" value="U2 snRNP auxiliary factor large subunit"/>
    <property type="match status" value="1"/>
</dbReference>
<dbReference type="Gene3D" id="3.30.70.330">
    <property type="match status" value="3"/>
</dbReference>
<dbReference type="IDEAL" id="IID00147"/>
<dbReference type="InterPro" id="IPR012677">
    <property type="entry name" value="Nucleotide-bd_a/b_plait_sf"/>
</dbReference>
<dbReference type="InterPro" id="IPR035979">
    <property type="entry name" value="RBD_domain_sf"/>
</dbReference>
<dbReference type="InterPro" id="IPR000504">
    <property type="entry name" value="RRM_dom"/>
</dbReference>
<dbReference type="InterPro" id="IPR006529">
    <property type="entry name" value="U2AF_lg"/>
</dbReference>
<dbReference type="NCBIfam" id="TIGR01642">
    <property type="entry name" value="U2AF_lg"/>
    <property type="match status" value="1"/>
</dbReference>
<dbReference type="PANTHER" id="PTHR23139">
    <property type="entry name" value="RNA-BINDING PROTEIN"/>
    <property type="match status" value="1"/>
</dbReference>
<dbReference type="Pfam" id="PF00076">
    <property type="entry name" value="RRM_1"/>
    <property type="match status" value="3"/>
</dbReference>
<dbReference type="SMART" id="SM00360">
    <property type="entry name" value="RRM"/>
    <property type="match status" value="3"/>
</dbReference>
<dbReference type="SUPFAM" id="SSF54928">
    <property type="entry name" value="RNA-binding domain, RBD"/>
    <property type="match status" value="3"/>
</dbReference>
<dbReference type="PROSITE" id="PS50102">
    <property type="entry name" value="RRM"/>
    <property type="match status" value="3"/>
</dbReference>
<evidence type="ECO:0000250" key="1">
    <source>
        <dbReference type="UniProtKB" id="P26369"/>
    </source>
</evidence>
<evidence type="ECO:0000255" key="2">
    <source>
        <dbReference type="PROSITE-ProRule" id="PRU00176"/>
    </source>
</evidence>
<evidence type="ECO:0000256" key="3">
    <source>
        <dbReference type="SAM" id="MobiDB-lite"/>
    </source>
</evidence>
<evidence type="ECO:0000269" key="4">
    <source>
    </source>
</evidence>
<evidence type="ECO:0000269" key="5">
    <source>
    </source>
</evidence>
<evidence type="ECO:0000269" key="6">
    <source>
    </source>
</evidence>
<evidence type="ECO:0000269" key="7">
    <source>
    </source>
</evidence>
<evidence type="ECO:0000269" key="8">
    <source>
    </source>
</evidence>
<evidence type="ECO:0000269" key="9">
    <source>
    </source>
</evidence>
<evidence type="ECO:0000269" key="10">
    <source>
    </source>
</evidence>
<evidence type="ECO:0000269" key="11">
    <source>
    </source>
</evidence>
<evidence type="ECO:0000269" key="12">
    <source>
    </source>
</evidence>
<evidence type="ECO:0000269" key="13">
    <source>
    </source>
</evidence>
<evidence type="ECO:0000269" key="14">
    <source>
    </source>
</evidence>
<evidence type="ECO:0000269" key="15">
    <source>
    </source>
</evidence>
<evidence type="ECO:0000269" key="16">
    <source>
    </source>
</evidence>
<evidence type="ECO:0000269" key="17">
    <source>
    </source>
</evidence>
<evidence type="ECO:0000269" key="18">
    <source>
    </source>
</evidence>
<evidence type="ECO:0000269" key="19">
    <source>
    </source>
</evidence>
<evidence type="ECO:0000269" key="20">
    <source>
    </source>
</evidence>
<evidence type="ECO:0000269" key="21">
    <source>
    </source>
</evidence>
<evidence type="ECO:0000269" key="22">
    <source>
    </source>
</evidence>
<evidence type="ECO:0000269" key="23">
    <source ref="4"/>
</evidence>
<evidence type="ECO:0000303" key="24">
    <source>
    </source>
</evidence>
<evidence type="ECO:0000305" key="25"/>
<evidence type="ECO:0007744" key="26">
    <source>
    </source>
</evidence>
<evidence type="ECO:0007744" key="27">
    <source>
    </source>
</evidence>
<evidence type="ECO:0007744" key="28">
    <source>
    </source>
</evidence>
<evidence type="ECO:0007744" key="29">
    <source>
    </source>
</evidence>
<evidence type="ECO:0007744" key="30">
    <source>
    </source>
</evidence>
<evidence type="ECO:0007744" key="31">
    <source>
    </source>
</evidence>
<evidence type="ECO:0007744" key="32">
    <source>
    </source>
</evidence>
<evidence type="ECO:0007744" key="33">
    <source>
    </source>
</evidence>
<evidence type="ECO:0007744" key="34">
    <source>
    </source>
</evidence>
<evidence type="ECO:0007744" key="35">
    <source>
    </source>
</evidence>
<evidence type="ECO:0007744" key="36">
    <source>
    </source>
</evidence>
<evidence type="ECO:0007829" key="37">
    <source>
        <dbReference type="PDB" id="1JMT"/>
    </source>
</evidence>
<evidence type="ECO:0007829" key="38">
    <source>
        <dbReference type="PDB" id="1O0P"/>
    </source>
</evidence>
<evidence type="ECO:0007829" key="39">
    <source>
        <dbReference type="PDB" id="1U2F"/>
    </source>
</evidence>
<evidence type="ECO:0007829" key="40">
    <source>
        <dbReference type="PDB" id="2U2F"/>
    </source>
</evidence>
<evidence type="ECO:0007829" key="41">
    <source>
        <dbReference type="PDB" id="2YH0"/>
    </source>
</evidence>
<evidence type="ECO:0007829" key="42">
    <source>
        <dbReference type="PDB" id="2YH1"/>
    </source>
</evidence>
<evidence type="ECO:0007829" key="43">
    <source>
        <dbReference type="PDB" id="4FXW"/>
    </source>
</evidence>
<evidence type="ECO:0007829" key="44">
    <source>
        <dbReference type="PDB" id="5W0G"/>
    </source>
</evidence>
<evidence type="ECO:0007829" key="45">
    <source>
        <dbReference type="PDB" id="5W0H"/>
    </source>
</evidence>
<evidence type="ECO:0007829" key="46">
    <source>
        <dbReference type="PDB" id="6TR0"/>
    </source>
</evidence>
<evidence type="ECO:0007829" key="47">
    <source>
        <dbReference type="PDB" id="6XLV"/>
    </source>
</evidence>
<evidence type="ECO:0007829" key="48">
    <source>
        <dbReference type="PDB" id="7SN6"/>
    </source>
</evidence>
<evidence type="ECO:0007829" key="49">
    <source>
        <dbReference type="PDB" id="8P25"/>
    </source>
</evidence>
<evidence type="ECO:0007829" key="50">
    <source>
        <dbReference type="PDB" id="9C7A"/>
    </source>
</evidence>
<comment type="function">
    <text evidence="8 9 11 12 15">Plays a role in pre-mRNA splicing and 3'-end processing (PubMed:17024186). By recruiting PRPF19 and the PRP19C/Prp19 complex/NTC/Nineteen complex to the RNA polymerase II C-terminal domain (CTD), and thereby pre-mRNA, may couple transcription to splicing (PubMed:21536736). Induces cardiac troponin-T (TNNT2) pre-mRNA exon inclusion in muscle. Regulates the TNNT2 exon 5 inclusion through competition with MBNL1. Binds preferentially to a single-stranded structure within the polypyrimidine tract of TNNT2 intron 4 during spliceosome assembly. Required for the export of mRNA out of the nucleus, even if the mRNA is encoded by an intron-less gene. Represses the splicing of MAPT/Tau exon 10. Positively regulates pre-mRNA 3'-end processing by recruiting the CFIm complex to cleavage and polyadenylation signals (PubMed:17024186).</text>
</comment>
<comment type="subunit">
    <text evidence="1 4 5 6 7 9 10 13 14 15 16 17 21 22">Interacts with U2AF1L4 (By similarity). Heterodimer with U2AF1 (PubMed:11551507). Binds unphosphorylated SF1 (PubMed:10449420, PubMed:12718882). Interacts with SCAF11 and SNW1 (PubMed:21460037, PubMed:9447963). Interacts with ZRSR2/U2AF1-RS2. Interacts with RBM17 (PubMed:17589525). Interacts with PRPF19; the interaction is direct. Interacts with POLR2A (via the C-terminal domain); recruits PRPF19 and the Prp19 complex to the pre-mRNA (PubMed:21536736). Interacts with KHDC4 (Isoform 2) (PubMed:19641227). Interacts with ZRSR2 (PubMed:9237760). Interacts with the SF3B complex composed of SF3B1, SF3B2, SF3B3, SF3B4, SF3B5, SF3B6 and PHF5A (PubMed:27720643). Interacts (via N-terminus) with CPSF7 (via C-terminus); this interaction stimulates pre-mRNA 3'-end processing by promoting the recruitment of the CFIm complex to cleavage and polyadenylation signals (PubMed:17024186). Interacts with ARGLU1; interaction may be involved in ARGLU1-mediated modulation of alternative splicing (PubMed:30698747).</text>
</comment>
<comment type="interaction">
    <interactant intactId="EBI-742339">
        <id>P26368</id>
    </interactant>
    <interactant intactId="EBI-2808785">
        <id>Q9NWB6</id>
        <label>ARGLU1</label>
    </interactant>
    <organismsDiffer>false</organismsDiffer>
    <experiments>4</experiments>
</comment>
<comment type="interaction">
    <interactant intactId="EBI-742339">
        <id>P26368</id>
    </interactant>
    <interactant intactId="EBI-930964">
        <id>P54253</id>
        <label>ATXN1</label>
    </interactant>
    <organismsDiffer>false</organismsDiffer>
    <experiments>5</experiments>
</comment>
<comment type="interaction">
    <interactant intactId="EBI-742339">
        <id>P26368</id>
    </interactant>
    <interactant intactId="EBI-356265">
        <id>Q8IX12</id>
        <label>CCAR1</label>
    </interactant>
    <organismsDiffer>false</organismsDiffer>
    <experiments>3</experiments>
</comment>
<comment type="interaction">
    <interactant intactId="EBI-742339">
        <id>P26368</id>
    </interactant>
    <interactant intactId="EBI-2555370">
        <id>Q8IWX8</id>
        <label>CHERP</label>
    </interactant>
    <organismsDiffer>false</organismsDiffer>
    <experiments>3</experiments>
</comment>
<comment type="interaction">
    <interactant intactId="EBI-742339">
        <id>P26368</id>
    </interactant>
    <interactant intactId="EBI-746909">
        <id>Q8N684</id>
        <label>CPSF7</label>
    </interactant>
    <organismsDiffer>false</organismsDiffer>
    <experiments>3</experiments>
</comment>
<comment type="interaction">
    <interactant intactId="EBI-742339">
        <id>P26368</id>
    </interactant>
    <interactant intactId="EBI-10186082">
        <id>Q9UI36-2</id>
        <label>DACH1</label>
    </interactant>
    <organismsDiffer>false</organismsDiffer>
    <experiments>3</experiments>
</comment>
<comment type="interaction">
    <interactant intactId="EBI-742339">
        <id>P26368</id>
    </interactant>
    <interactant intactId="EBI-744322">
        <id>O43395</id>
        <label>PRPF3</label>
    </interactant>
    <organismsDiffer>false</organismsDiffer>
    <experiments>4</experiments>
</comment>
<comment type="interaction">
    <interactant intactId="EBI-742339">
        <id>P26368</id>
    </interactant>
    <interactant intactId="EBI-1053259">
        <id>Q9UHX1</id>
        <label>PUF60</label>
    </interactant>
    <organismsDiffer>false</organismsDiffer>
    <experiments>6</experiments>
</comment>
<comment type="interaction">
    <interactant intactId="EBI-742339">
        <id>P26368</id>
    </interactant>
    <interactant intactId="EBI-721525">
        <id>P98175</id>
        <label>RBM10</label>
    </interactant>
    <organismsDiffer>false</organismsDiffer>
    <experiments>3</experiments>
</comment>
<comment type="interaction">
    <interactant intactId="EBI-742339">
        <id>P26368</id>
    </interactant>
    <interactant intactId="EBI-740272">
        <id>Q96I25</id>
        <label>RBM17</label>
    </interactant>
    <organismsDiffer>false</organismsDiffer>
    <experiments>2</experiments>
</comment>
<comment type="interaction">
    <interactant intactId="EBI-742339">
        <id>P26368</id>
    </interactant>
    <interactant intactId="EBI-714003">
        <id>P52756</id>
        <label>RBM5</label>
    </interactant>
    <organismsDiffer>false</organismsDiffer>
    <experiments>3</experiments>
</comment>
<comment type="interaction">
    <interactant intactId="EBI-742339">
        <id>P26368</id>
    </interactant>
    <interactant intactId="EBI-347495">
        <id>P82979</id>
        <label>SARNP</label>
    </interactant>
    <organismsDiffer>false</organismsDiffer>
    <experiments>3</experiments>
</comment>
<comment type="interaction">
    <interactant intactId="EBI-742339">
        <id>P26368</id>
    </interactant>
    <interactant intactId="EBI-3934011">
        <id>Q99590</id>
        <label>SCAF11</label>
    </interactant>
    <organismsDiffer>false</organismsDiffer>
    <experiments>5</experiments>
</comment>
<comment type="interaction">
    <interactant intactId="EBI-742339">
        <id>P26368</id>
    </interactant>
    <interactant intactId="EBI-744603">
        <id>Q15637</id>
        <label>SF1</label>
    </interactant>
    <organismsDiffer>false</organismsDiffer>
    <experiments>23</experiments>
</comment>
<comment type="interaction">
    <interactant intactId="EBI-742339">
        <id>P26368</id>
    </interactant>
    <interactant intactId="EBI-607085">
        <id>P09012</id>
        <label>SNRPA</label>
    </interactant>
    <organismsDiffer>false</organismsDiffer>
    <experiments>5</experiments>
</comment>
<comment type="interaction">
    <interactant intactId="EBI-742339">
        <id>P26368</id>
    </interactant>
    <interactant intactId="EBI-632715">
        <id>Q13573</id>
        <label>SNW1</label>
    </interactant>
    <organismsDiffer>false</organismsDiffer>
    <experiments>6</experiments>
</comment>
<comment type="interaction">
    <interactant intactId="EBI-742339">
        <id>P26368</id>
    </interactant>
    <interactant intactId="EBI-593303">
        <id>P78362</id>
        <label>SRPK2</label>
    </interactant>
    <organismsDiffer>false</organismsDiffer>
    <experiments>8</experiments>
</comment>
<comment type="interaction">
    <interactant intactId="EBI-742339">
        <id>P26368</id>
    </interactant>
    <interactant intactId="EBI-398920">
        <id>Q07955</id>
        <label>SRSF1</label>
    </interactant>
    <organismsDiffer>false</organismsDiffer>
    <experiments>4</experiments>
</comment>
<comment type="interaction">
    <interactant intactId="EBI-742339">
        <id>P26368</id>
    </interactant>
    <interactant intactId="EBI-2691671">
        <id>Q8IWZ8</id>
        <label>SUGP1</label>
    </interactant>
    <organismsDiffer>false</organismsDiffer>
    <experiments>4</experiments>
</comment>
<comment type="interaction">
    <interactant intactId="EBI-742339">
        <id>P26368</id>
    </interactant>
    <interactant intactId="EBI-741515">
        <id>Q9NVV9</id>
        <label>THAP1</label>
    </interactant>
    <organismsDiffer>false</organismsDiffer>
    <experiments>4</experiments>
</comment>
<comment type="interaction">
    <interactant intactId="EBI-742339">
        <id>P26368</id>
    </interactant>
    <interactant intactId="EBI-717810">
        <id>Q08117</id>
        <label>TLE5</label>
    </interactant>
    <organismsDiffer>false</organismsDiffer>
    <experiments>3</experiments>
</comment>
<comment type="interaction">
    <interactant intactId="EBI-742339">
        <id>P26368</id>
    </interactant>
    <interactant intactId="EBI-632461">
        <id>Q01081</id>
        <label>U2AF1</label>
    </interactant>
    <organismsDiffer>false</organismsDiffer>
    <experiments>14</experiments>
</comment>
<comment type="interaction">
    <interactant intactId="EBI-11097439">
        <id>P26368-2</id>
    </interactant>
    <interactant intactId="EBI-348622">
        <id>Q13838</id>
        <label>DDX39B</label>
    </interactant>
    <organismsDiffer>false</organismsDiffer>
    <experiments>3</experiments>
</comment>
<comment type="interaction">
    <interactant intactId="EBI-11097439">
        <id>P26368-2</id>
    </interactant>
    <interactant intactId="EBI-12121668">
        <id>Q96AE4-2</id>
        <label>FUBP1</label>
    </interactant>
    <organismsDiffer>false</organismsDiffer>
    <experiments>3</experiments>
</comment>
<comment type="interaction">
    <interactant intactId="EBI-11097439">
        <id>P26368-2</id>
    </interactant>
    <interactant intactId="EBI-2549423">
        <id>Q6NT76</id>
        <label>HMBOX1</label>
    </interactant>
    <organismsDiffer>false</organismsDiffer>
    <experiments>3</experiments>
</comment>
<comment type="interaction">
    <interactant intactId="EBI-11097439">
        <id>P26368-2</id>
    </interactant>
    <interactant intactId="EBI-715611">
        <id>Q9C086</id>
        <label>INO80B</label>
    </interactant>
    <organismsDiffer>false</organismsDiffer>
    <experiments>3</experiments>
</comment>
<comment type="interaction">
    <interactant intactId="EBI-11097439">
        <id>P26368-2</id>
    </interactant>
    <interactant intactId="EBI-9089060">
        <id>Q7Z7F0-4</id>
        <label>KHDC4</label>
    </interactant>
    <organismsDiffer>false</organismsDiffer>
    <experiments>3</experiments>
</comment>
<comment type="interaction">
    <interactant intactId="EBI-11097439">
        <id>P26368-2</id>
    </interactant>
    <interactant intactId="EBI-2371967">
        <id>Q9P015</id>
        <label>MRPL15</label>
    </interactant>
    <organismsDiffer>false</organismsDiffer>
    <experiments>3</experiments>
</comment>
<comment type="interaction">
    <interactant intactId="EBI-11097439">
        <id>P26368-2</id>
    </interactant>
    <interactant intactId="EBI-3920396">
        <id>Q6ZUT1</id>
        <label>NKAPD1</label>
    </interactant>
    <organismsDiffer>false</organismsDiffer>
    <experiments>3</experiments>
</comment>
<comment type="interaction">
    <interactant intactId="EBI-11097439">
        <id>P26368-2</id>
    </interactant>
    <interactant intactId="EBI-744322">
        <id>O43395</id>
        <label>PRPF3</label>
    </interactant>
    <organismsDiffer>false</organismsDiffer>
    <experiments>3</experiments>
</comment>
<comment type="interaction">
    <interactant intactId="EBI-11097439">
        <id>P26368-2</id>
    </interactant>
    <interactant intactId="EBI-11529177">
        <id>Q9UHX1-2</id>
        <label>PUF60</label>
    </interactant>
    <organismsDiffer>false</organismsDiffer>
    <experiments>3</experiments>
</comment>
<comment type="interaction">
    <interactant intactId="EBI-11097439">
        <id>P26368-2</id>
    </interactant>
    <interactant intactId="EBI-741332">
        <id>P57052</id>
        <label>RBM11</label>
    </interactant>
    <organismsDiffer>false</organismsDiffer>
    <experiments>3</experiments>
</comment>
<comment type="interaction">
    <interactant intactId="EBI-11097439">
        <id>P26368-2</id>
    </interactant>
    <interactant intactId="EBI-8642021">
        <id>Q15415</id>
        <label>RBMY1J</label>
    </interactant>
    <organismsDiffer>false</organismsDiffer>
    <experiments>3</experiments>
</comment>
<comment type="interaction">
    <interactant intactId="EBI-11097439">
        <id>P26368-2</id>
    </interactant>
    <interactant intactId="EBI-12223157">
        <id>Q15637-4</id>
        <label>SF1</label>
    </interactant>
    <organismsDiffer>false</organismsDiffer>
    <experiments>5</experiments>
</comment>
<comment type="interaction">
    <interactant intactId="EBI-11097439">
        <id>P26368-2</id>
    </interactant>
    <interactant intactId="EBI-607085">
        <id>P09012</id>
        <label>SNRPA</label>
    </interactant>
    <organismsDiffer>false</organismsDiffer>
    <experiments>6</experiments>
</comment>
<comment type="interaction">
    <interactant intactId="EBI-11097439">
        <id>P26368-2</id>
    </interactant>
    <interactant intactId="EBI-593303">
        <id>P78362</id>
        <label>SRPK2</label>
    </interactant>
    <organismsDiffer>false</organismsDiffer>
    <experiments>3</experiments>
</comment>
<comment type="interaction">
    <interactant intactId="EBI-11097439">
        <id>P26368-2</id>
    </interactant>
    <interactant intactId="EBI-372557">
        <id>P84103</id>
        <label>SRSF3</label>
    </interactant>
    <organismsDiffer>false</organismsDiffer>
    <experiments>3</experiments>
</comment>
<comment type="interaction">
    <interactant intactId="EBI-11097439">
        <id>P26368-2</id>
    </interactant>
    <interactant intactId="EBI-745680">
        <id>Q96MF2</id>
        <label>STAC3</label>
    </interactant>
    <organismsDiffer>false</organismsDiffer>
    <experiments>3</experiments>
</comment>
<comment type="interaction">
    <interactant intactId="EBI-11097439">
        <id>P26368-2</id>
    </interactant>
    <interactant intactId="EBI-12127592">
        <id>Q7RTU1</id>
        <label>TCF23</label>
    </interactant>
    <organismsDiffer>false</organismsDiffer>
    <experiments>3</experiments>
</comment>
<comment type="interaction">
    <interactant intactId="EBI-11097439">
        <id>P26368-2</id>
    </interactant>
    <interactant intactId="EBI-11741437">
        <id>Q08117-2</id>
        <label>TLE5</label>
    </interactant>
    <organismsDiffer>false</organismsDiffer>
    <experiments>3</experiments>
</comment>
<comment type="interaction">
    <interactant intactId="EBI-11097439">
        <id>P26368-2</id>
    </interactant>
    <interactant intactId="EBI-632461">
        <id>Q01081</id>
        <label>U2AF1</label>
    </interactant>
    <organismsDiffer>false</organismsDiffer>
    <experiments>8</experiments>
</comment>
<comment type="interaction">
    <interactant intactId="EBI-11097439">
        <id>P26368-2</id>
    </interactant>
    <interactant intactId="EBI-7234993">
        <id>Q9UII5</id>
        <label>ZNF107</label>
    </interactant>
    <organismsDiffer>false</organismsDiffer>
    <experiments>3</experiments>
</comment>
<comment type="interaction">
    <interactant intactId="EBI-11097439">
        <id>P26368-2</id>
    </interactant>
    <interactant intactId="EBI-11035148">
        <id>Q8TF50</id>
        <label>ZNF526</label>
    </interactant>
    <organismsDiffer>false</organismsDiffer>
    <experiments>3</experiments>
</comment>
<comment type="interaction">
    <interactant intactId="EBI-11097439">
        <id>P26368-2</id>
    </interactant>
    <interactant intactId="EBI-8490788">
        <id>Q68EA5</id>
        <label>ZNF57</label>
    </interactant>
    <organismsDiffer>false</organismsDiffer>
    <experiments>3</experiments>
</comment>
<comment type="interaction">
    <interactant intactId="EBI-11097439">
        <id>P26368-2</id>
    </interactant>
    <interactant intactId="EBI-7138235">
        <id>Q9NQZ8</id>
        <label>ZNF71</label>
    </interactant>
    <organismsDiffer>false</organismsDiffer>
    <experiments>3</experiments>
</comment>
<comment type="interaction">
    <interactant intactId="EBI-11097439">
        <id>P26368-2</id>
    </interactant>
    <interactant intactId="EBI-5667516">
        <id>Q9Y2P0</id>
        <label>ZNF835</label>
    </interactant>
    <organismsDiffer>false</organismsDiffer>
    <experiments>3</experiments>
</comment>
<comment type="interaction">
    <interactant intactId="EBI-11097439">
        <id>P26368-2</id>
    </interactant>
    <interactant intactId="EBI-12270264">
        <id>Q15695</id>
        <label>ZRSR2P1</label>
    </interactant>
    <organismsDiffer>false</organismsDiffer>
    <experiments>3</experiments>
</comment>
<comment type="subcellular location">
    <subcellularLocation>
        <location>Nucleus</location>
    </subcellularLocation>
</comment>
<comment type="alternative products">
    <event type="alternative splicing"/>
    <isoform>
        <id>P26368-1</id>
        <name>1</name>
        <sequence type="displayed"/>
    </isoform>
    <isoform>
        <id>P26368-2</id>
        <name>2</name>
        <sequence type="described" ref="VSP_035414"/>
    </isoform>
</comment>
<comment type="PTM">
    <text evidence="12">Lysyl-hydroxylation at Lys-15 and Lys-276 affects the mRNA splicing activity of the protein, leading to regulate some, but not all, alternative splicing events.</text>
</comment>
<comment type="disease" evidence="18 19 20">
    <disease id="DI-06773">
        <name>Developmental delay, dysmorphic facies, and brain anomalies</name>
        <acronym>DEVDFB</acronym>
        <description>An autosomal dominant disorder characterized by global developmental delay with intellectual disability and speech delay, epilepsy, hypotonia, short stature, microcephaly, intermittent exotropia, and non-specific facial dysmorphism. Brain imaging shows a thin corpus callosum and/or delayed myelination.</description>
        <dbReference type="MIM" id="620535"/>
    </disease>
    <text>The disease is caused by variants affecting the gene represented in this entry.</text>
</comment>
<comment type="similarity">
    <text evidence="25">Belongs to the splicing factor SR family.</text>
</comment>
<proteinExistence type="evidence at protein level"/>
<reference key="1">
    <citation type="journal article" date="1992" name="Nature">
        <title>Cloning and domain structure of the mammalian splicing factor U2AF.</title>
        <authorList>
            <person name="Zamore P.D."/>
            <person name="Patton J.G."/>
            <person name="Green M.R."/>
        </authorList>
    </citation>
    <scope>NUCLEOTIDE SEQUENCE [MRNA] (ISOFORM 1)</scope>
</reference>
<reference key="2">
    <citation type="submission" date="2005-07" db="EMBL/GenBank/DDBJ databases">
        <authorList>
            <person name="Mural R.J."/>
            <person name="Istrail S."/>
            <person name="Sutton G.G."/>
            <person name="Florea L."/>
            <person name="Halpern A.L."/>
            <person name="Mobarry C.M."/>
            <person name="Lippert R."/>
            <person name="Walenz B."/>
            <person name="Shatkay H."/>
            <person name="Dew I."/>
            <person name="Miller J.R."/>
            <person name="Flanigan M.J."/>
            <person name="Edwards N.J."/>
            <person name="Bolanos R."/>
            <person name="Fasulo D."/>
            <person name="Halldorsson B.V."/>
            <person name="Hannenhalli S."/>
            <person name="Turner R."/>
            <person name="Yooseph S."/>
            <person name="Lu F."/>
            <person name="Nusskern D.R."/>
            <person name="Shue B.C."/>
            <person name="Zheng X.H."/>
            <person name="Zhong F."/>
            <person name="Delcher A.L."/>
            <person name="Huson D.H."/>
            <person name="Kravitz S.A."/>
            <person name="Mouchard L."/>
            <person name="Reinert K."/>
            <person name="Remington K.A."/>
            <person name="Clark A.G."/>
            <person name="Waterman M.S."/>
            <person name="Eichler E.E."/>
            <person name="Adams M.D."/>
            <person name="Hunkapiller M.W."/>
            <person name="Myers E.W."/>
            <person name="Venter J.C."/>
        </authorList>
    </citation>
    <scope>NUCLEOTIDE SEQUENCE [LARGE SCALE GENOMIC DNA]</scope>
</reference>
<reference key="3">
    <citation type="journal article" date="2004" name="Genome Res.">
        <title>The status, quality, and expansion of the NIH full-length cDNA project: the Mammalian Gene Collection (MGC).</title>
        <authorList>
            <consortium name="The MGC Project Team"/>
        </authorList>
    </citation>
    <scope>NUCLEOTIDE SEQUENCE [LARGE SCALE MRNA] (ISOFORM 2)</scope>
    <source>
        <tissue>Lymph</tissue>
        <tissue>Skin</tissue>
    </source>
</reference>
<reference key="4">
    <citation type="submission" date="2006-11" db="UniProtKB">
        <authorList>
            <person name="Bienvenut W.V."/>
            <person name="Heiserich L."/>
            <person name="Boulahbel H."/>
            <person name="Gottlieb E."/>
        </authorList>
    </citation>
    <scope>PROTEIN SEQUENCE OF 2-9; 196-203; 277-286 AND 463-471</scope>
    <scope>CLEAVAGE OF INITIATOR METHIONINE</scope>
    <scope>ACETYLATION AT SER-2</scope>
    <scope>IDENTIFICATION BY MASS SPECTROMETRY</scope>
    <source>
        <tissue>Colon carcinoma</tissue>
    </source>
</reference>
<reference key="5">
    <citation type="journal article" date="2002" name="Genome Res.">
        <title>Large-scale proteomic analysis of the human spliceosome.</title>
        <authorList>
            <person name="Rappsilber J."/>
            <person name="Ryder U."/>
            <person name="Lamond A.I."/>
            <person name="Mann M."/>
        </authorList>
    </citation>
    <scope>PROTEIN SEQUENCE OF 261-286</scope>
    <scope>IDENTIFICATION BY MASS SPECTROMETRY</scope>
    <scope>INTERACTION WITH THE SPLICEOSOME</scope>
</reference>
<reference key="6">
    <citation type="journal article" date="1997" name="Nature">
        <title>A protein related to splicing factor U2AF35 that interacts with U2AF65 and SR proteins in splicing of pre-mRNA.</title>
        <authorList>
            <person name="Tronchere H."/>
            <person name="Wang J."/>
            <person name="Fu X.D."/>
        </authorList>
    </citation>
    <scope>INTERACTION WITH ZRSR2</scope>
</reference>
<reference key="7">
    <citation type="journal article" date="1998" name="Mol. Cell. Biol.">
        <title>Sip1, a novel RS domain-containing protein essential for pre-mRNA splicing.</title>
        <authorList>
            <person name="Zhang W.-J."/>
            <person name="Wu J.Y."/>
        </authorList>
    </citation>
    <scope>INTERACTION WITH SCAF11</scope>
</reference>
<reference key="8">
    <citation type="journal article" date="1999" name="EMBO J.">
        <title>Phosphorylation of splicing factor SF1 on Ser20 by cGMP-dependent protein kinase regulates spliceosome assembly.</title>
        <authorList>
            <person name="Wang X."/>
            <person name="Bruderer S."/>
            <person name="Rafi Z."/>
            <person name="Xue J."/>
            <person name="Milburn P.J."/>
            <person name="Kraemer A."/>
            <person name="Robinson P.J."/>
        </authorList>
    </citation>
    <scope>INTERACTION WITH SF1</scope>
</reference>
<reference key="9">
    <citation type="journal article" date="2003" name="Nature">
        <title>Proteomic characterization of the human centrosome by protein correlation profiling.</title>
        <authorList>
            <person name="Andersen J.S."/>
            <person name="Wilkinson C.J."/>
            <person name="Mayor T."/>
            <person name="Mortensen P."/>
            <person name="Nigg E.A."/>
            <person name="Mann M."/>
        </authorList>
    </citation>
    <scope>IDENTIFICATION BY MASS SPECTROMETRY</scope>
    <source>
        <tissue>Lymphoblast</tissue>
    </source>
</reference>
<reference key="10">
    <citation type="journal article" date="2004" name="J. Neurochem.">
        <title>Tau exon 10, whose missplicing causes frontotemporal dementia, is regulated by an intricate interplay of cis elements and trans factors.</title>
        <authorList>
            <person name="Wang J."/>
            <person name="Gao Q.S."/>
            <person name="Wang Y."/>
            <person name="Lafyatis R."/>
            <person name="Stamm S."/>
            <person name="Andreadis A."/>
        </authorList>
    </citation>
    <scope>FUNCTION</scope>
</reference>
<reference key="11">
    <citation type="journal article" date="2006" name="Cell">
        <title>Global, in vivo, and site-specific phosphorylation dynamics in signaling networks.</title>
        <authorList>
            <person name="Olsen J.V."/>
            <person name="Blagoev B."/>
            <person name="Gnad F."/>
            <person name="Macek B."/>
            <person name="Kumar C."/>
            <person name="Mortensen P."/>
            <person name="Mann M."/>
        </authorList>
    </citation>
    <scope>PHOSPHORYLATION [LARGE SCALE ANALYSIS] AT SER-2</scope>
    <scope>IDENTIFICATION BY MASS SPECTROMETRY [LARGE SCALE ANALYSIS]</scope>
    <source>
        <tissue>Cervix carcinoma</tissue>
    </source>
</reference>
<reference key="12">
    <citation type="journal article" date="2006" name="EMBO J.">
        <title>An interaction between U2AF 65 and CF I(m) links the splicing and 3' end processing machineries.</title>
        <authorList>
            <person name="Millevoi S."/>
            <person name="Loulergue C."/>
            <person name="Dettwiler S."/>
            <person name="Karaa S.Z."/>
            <person name="Keller W."/>
            <person name="Antoniou M."/>
            <person name="Vagner S."/>
        </authorList>
    </citation>
    <scope>FUNCTION</scope>
    <scope>INTERACTION WITH CPSF7</scope>
    <scope>DOMAIN</scope>
</reference>
<reference key="13">
    <citation type="journal article" date="2007" name="Nat. Struct. Mol. Biol.">
        <title>U2AF-homology motif interactions are required for alternative splicing regulation by SPF45.</title>
        <authorList>
            <person name="Corsini L."/>
            <person name="Bonnal S."/>
            <person name="Basquin J."/>
            <person name="Hothorn M."/>
            <person name="Scheffzek K."/>
            <person name="Valcarcel J."/>
            <person name="Sattler M."/>
        </authorList>
    </citation>
    <scope>INTERACTION WITH RBM17</scope>
</reference>
<reference key="14">
    <citation type="journal article" date="2008" name="Proc. Natl. Acad. Sci. U.S.A.">
        <title>A quantitative atlas of mitotic phosphorylation.</title>
        <authorList>
            <person name="Dephoure N."/>
            <person name="Zhou C."/>
            <person name="Villen J."/>
            <person name="Beausoleil S.A."/>
            <person name="Bakalarski C.E."/>
            <person name="Elledge S.J."/>
            <person name="Gygi S.P."/>
        </authorList>
    </citation>
    <scope>IDENTIFICATION BY MASS SPECTROMETRY [LARGE SCALE ANALYSIS]</scope>
    <source>
        <tissue>Cervix carcinoma</tissue>
    </source>
</reference>
<reference key="15">
    <citation type="journal article" date="2009" name="Anal. Chem.">
        <title>Lys-N and trypsin cover complementary parts of the phosphoproteome in a refined SCX-based approach.</title>
        <authorList>
            <person name="Gauci S."/>
            <person name="Helbig A.O."/>
            <person name="Slijper M."/>
            <person name="Krijgsveld J."/>
            <person name="Heck A.J."/>
            <person name="Mohammed S."/>
        </authorList>
    </citation>
    <scope>ACETYLATION [LARGE SCALE ANALYSIS] AT SER-2</scope>
    <scope>CLEAVAGE OF INITIATOR METHIONINE [LARGE SCALE ANALYSIS]</scope>
    <scope>IDENTIFICATION BY MASS SPECTROMETRY [LARGE SCALE ANALYSIS]</scope>
</reference>
<reference key="16">
    <citation type="journal article" date="2009" name="J. Biol. Chem.">
        <title>Blom7alpha is a novel heterogeneous nuclear ribonucleoprotein K homology domain protein involved in pre-mRNA splicing that interacts with SNEVPrp19-Pso4.</title>
        <authorList>
            <person name="Grillari J."/>
            <person name="Loescher M."/>
            <person name="Denegri M."/>
            <person name="Lee K."/>
            <person name="Fortschegger K."/>
            <person name="Eisenhaber F."/>
            <person name="Ajuh P."/>
            <person name="Lamond A.I."/>
            <person name="Katinger H."/>
            <person name="Grillari-Voglauer R."/>
        </authorList>
    </citation>
    <scope>SUBUNIT</scope>
    <scope>INTERACTION WITH KHDC4</scope>
</reference>
<reference key="17">
    <citation type="journal article" date="2009" name="Proc. Natl. Acad. Sci. U.S.A.">
        <title>The protein factors MBNL1 and U2AF65 bind alternative RNA structures to regulate splicing.</title>
        <authorList>
            <person name="Warf M.B."/>
            <person name="Diegel J.V."/>
            <person name="von Hippel P.H."/>
            <person name="Berglund J.A."/>
        </authorList>
    </citation>
    <scope>FUNCTION</scope>
    <scope>RNA-BINDING</scope>
</reference>
<reference key="18">
    <citation type="journal article" date="2009" name="Sci. Signal.">
        <title>Quantitative phosphoproteomic analysis of T cell receptor signaling reveals system-wide modulation of protein-protein interactions.</title>
        <authorList>
            <person name="Mayya V."/>
            <person name="Lundgren D.H."/>
            <person name="Hwang S.-I."/>
            <person name="Rezaul K."/>
            <person name="Wu L."/>
            <person name="Eng J.K."/>
            <person name="Rodionov V."/>
            <person name="Han D.K."/>
        </authorList>
    </citation>
    <scope>IDENTIFICATION BY MASS SPECTROMETRY [LARGE SCALE ANALYSIS]</scope>
    <source>
        <tissue>Leukemic T-cell</tissue>
    </source>
</reference>
<reference key="19">
    <citation type="journal article" date="2009" name="Science">
        <title>Lysine acetylation targets protein complexes and co-regulates major cellular functions.</title>
        <authorList>
            <person name="Choudhary C."/>
            <person name="Kumar C."/>
            <person name="Gnad F."/>
            <person name="Nielsen M.L."/>
            <person name="Rehman M."/>
            <person name="Walther T.C."/>
            <person name="Olsen J.V."/>
            <person name="Mann M."/>
        </authorList>
    </citation>
    <scope>ACETYLATION [LARGE SCALE ANALYSIS] AT LYS-70</scope>
    <scope>IDENTIFICATION BY MASS SPECTROMETRY [LARGE SCALE ANALYSIS]</scope>
</reference>
<reference key="20">
    <citation type="journal article" date="2009" name="Science">
        <title>Jmjd6 catalyses lysyl-hydroxylation of U2AF65, a protein associated with RNA splicing.</title>
        <authorList>
            <person name="Webby C.J."/>
            <person name="Wolf A."/>
            <person name="Gromak N."/>
            <person name="Dreger M."/>
            <person name="Kramer H."/>
            <person name="Kessler B."/>
            <person name="Nielsen M.L."/>
            <person name="Schmitz C."/>
            <person name="Butler D.S."/>
            <person name="Yates J.R. III"/>
            <person name="Delahunty C.M."/>
            <person name="Hahn P."/>
            <person name="Lengeling A."/>
            <person name="Mann M."/>
            <person name="Proudfoot N.J."/>
            <person name="Schofield C.J."/>
            <person name="Boettger A."/>
        </authorList>
    </citation>
    <scope>FUNCTION</scope>
    <scope>HYDROXYLATION AT LYS-15 AND LYS-276</scope>
</reference>
<reference key="21">
    <citation type="journal article" date="2010" name="Sci. Signal.">
        <title>Quantitative phosphoproteomics reveals widespread full phosphorylation site occupancy during mitosis.</title>
        <authorList>
            <person name="Olsen J.V."/>
            <person name="Vermeulen M."/>
            <person name="Santamaria A."/>
            <person name="Kumar C."/>
            <person name="Miller M.L."/>
            <person name="Jensen L.J."/>
            <person name="Gnad F."/>
            <person name="Cox J."/>
            <person name="Jensen T.S."/>
            <person name="Nigg E.A."/>
            <person name="Brunak S."/>
            <person name="Mann M."/>
        </authorList>
    </citation>
    <scope>ACETYLATION [LARGE SCALE ANALYSIS] AT SER-2</scope>
    <scope>PHOSPHORYLATION [LARGE SCALE ANALYSIS] AT SER-2 AND SER-79</scope>
    <scope>CLEAVAGE OF INITIATOR METHIONINE [LARGE SCALE ANALYSIS]</scope>
    <scope>IDENTIFICATION BY MASS SPECTROMETRY [LARGE SCALE ANALYSIS]</scope>
    <source>
        <tissue>Cervix carcinoma</tissue>
    </source>
</reference>
<reference key="22">
    <citation type="journal article" date="2011" name="BMC Syst. Biol.">
        <title>Initial characterization of the human central proteome.</title>
        <authorList>
            <person name="Burkard T.R."/>
            <person name="Planyavsky M."/>
            <person name="Kaupe I."/>
            <person name="Breitwieser F.P."/>
            <person name="Buerckstuemmer T."/>
            <person name="Bennett K.L."/>
            <person name="Superti-Furga G."/>
            <person name="Colinge J."/>
        </authorList>
    </citation>
    <scope>IDENTIFICATION BY MASS SPECTROMETRY [LARGE SCALE ANALYSIS]</scope>
</reference>
<reference key="23">
    <citation type="journal article" date="2011" name="Genes Dev.">
        <title>SKIP counteracts p53-mediated apoptosis via selective regulation of p21Cip1 mRNA splicing.</title>
        <authorList>
            <person name="Chen Y."/>
            <person name="Zhang L."/>
            <person name="Jones K.A."/>
        </authorList>
    </citation>
    <scope>INTERACTION WITH SNW1</scope>
</reference>
<reference key="24">
    <citation type="journal article" date="2011" name="Genes Dev.">
        <title>The RNA polymerase II C-terminal domain promotes splicing activation through recruitment of a U2AF65-Prp19 complex.</title>
        <authorList>
            <person name="David C.J."/>
            <person name="Boyne A.R."/>
            <person name="Millhouse S.R."/>
            <person name="Manley J.L."/>
        </authorList>
    </citation>
    <scope>FUNCTION</scope>
    <scope>INTERACTION WITH POLR2A AND PRPF19</scope>
</reference>
<reference key="25">
    <citation type="journal article" date="2011" name="Sci. Signal.">
        <title>System-wide temporal characterization of the proteome and phosphoproteome of human embryonic stem cell differentiation.</title>
        <authorList>
            <person name="Rigbolt K.T."/>
            <person name="Prokhorova T.A."/>
            <person name="Akimov V."/>
            <person name="Henningsen J."/>
            <person name="Johansen P.T."/>
            <person name="Kratchmarova I."/>
            <person name="Kassem M."/>
            <person name="Mann M."/>
            <person name="Olsen J.V."/>
            <person name="Blagoev B."/>
        </authorList>
    </citation>
    <scope>PHOSPHORYLATION [LARGE SCALE ANALYSIS] AT SER-2</scope>
    <scope>IDENTIFICATION BY MASS SPECTROMETRY [LARGE SCALE ANALYSIS]</scope>
</reference>
<reference key="26">
    <citation type="journal article" date="2012" name="Mol. Cell. Proteomics">
        <title>Comparative large-scale characterisation of plant vs. mammal proteins reveals similar and idiosyncratic N-alpha acetylation features.</title>
        <authorList>
            <person name="Bienvenut W.V."/>
            <person name="Sumpton D."/>
            <person name="Martinez A."/>
            <person name="Lilla S."/>
            <person name="Espagne C."/>
            <person name="Meinnel T."/>
            <person name="Giglione C."/>
        </authorList>
    </citation>
    <scope>ACETYLATION [LARGE SCALE ANALYSIS] AT SER-2</scope>
    <scope>CLEAVAGE OF INITIATOR METHIONINE [LARGE SCALE ANALYSIS]</scope>
    <scope>IDENTIFICATION BY MASS SPECTROMETRY [LARGE SCALE ANALYSIS]</scope>
</reference>
<reference key="27">
    <citation type="journal article" date="2012" name="Proc. Natl. Acad. Sci. U.S.A.">
        <title>N-terminal acetylome analyses and functional insights of the N-terminal acetyltransferase NatB.</title>
        <authorList>
            <person name="Van Damme P."/>
            <person name="Lasa M."/>
            <person name="Polevoda B."/>
            <person name="Gazquez C."/>
            <person name="Elosegui-Artola A."/>
            <person name="Kim D.S."/>
            <person name="De Juan-Pardo E."/>
            <person name="Demeyer K."/>
            <person name="Hole K."/>
            <person name="Larrea E."/>
            <person name="Timmerman E."/>
            <person name="Prieto J."/>
            <person name="Arnesen T."/>
            <person name="Sherman F."/>
            <person name="Gevaert K."/>
            <person name="Aldabe R."/>
        </authorList>
    </citation>
    <scope>ACETYLATION [LARGE SCALE ANALYSIS] AT SER-2</scope>
    <scope>CLEAVAGE OF INITIATOR METHIONINE [LARGE SCALE ANALYSIS]</scope>
    <scope>IDENTIFICATION BY MASS SPECTROMETRY [LARGE SCALE ANALYSIS]</scope>
</reference>
<reference key="28">
    <citation type="journal article" date="2013" name="J. Proteome Res.">
        <title>Toward a comprehensive characterization of a human cancer cell phosphoproteome.</title>
        <authorList>
            <person name="Zhou H."/>
            <person name="Di Palma S."/>
            <person name="Preisinger C."/>
            <person name="Peng M."/>
            <person name="Polat A.N."/>
            <person name="Heck A.J."/>
            <person name="Mohammed S."/>
        </authorList>
    </citation>
    <scope>PHOSPHORYLATION [LARGE SCALE ANALYSIS] AT SER-2; SER-79 AND SER-294</scope>
    <scope>IDENTIFICATION BY MASS SPECTROMETRY [LARGE SCALE ANALYSIS]</scope>
    <source>
        <tissue>Cervix carcinoma</tissue>
        <tissue>Erythroleukemia</tissue>
    </source>
</reference>
<reference key="29">
    <citation type="journal article" date="2014" name="J. Proteomics">
        <title>An enzyme assisted RP-RPLC approach for in-depth analysis of human liver phosphoproteome.</title>
        <authorList>
            <person name="Bian Y."/>
            <person name="Song C."/>
            <person name="Cheng K."/>
            <person name="Dong M."/>
            <person name="Wang F."/>
            <person name="Huang J."/>
            <person name="Sun D."/>
            <person name="Wang L."/>
            <person name="Ye M."/>
            <person name="Zou H."/>
        </authorList>
    </citation>
    <scope>PHOSPHORYLATION [LARGE SCALE ANALYSIS] AT SER-79</scope>
    <scope>IDENTIFICATION BY MASS SPECTROMETRY [LARGE SCALE ANALYSIS]</scope>
    <source>
        <tissue>Liver</tissue>
    </source>
</reference>
<reference key="30">
    <citation type="journal article" date="2014" name="Nat. Struct. Mol. Biol.">
        <title>Uncovering global SUMOylation signaling networks in a site-specific manner.</title>
        <authorList>
            <person name="Hendriks I.A."/>
            <person name="D'Souza R.C."/>
            <person name="Yang B."/>
            <person name="Verlaan-de Vries M."/>
            <person name="Mann M."/>
            <person name="Vertegaal A.C."/>
        </authorList>
    </citation>
    <scope>SUMOYLATION [LARGE SCALE ANALYSIS] AT LYS-70</scope>
    <scope>IDENTIFICATION BY MASS SPECTROMETRY [LARGE SCALE ANALYSIS]</scope>
</reference>
<reference key="31">
    <citation type="journal article" date="2016" name="Mol. Cell">
        <title>Molecular architecture of SF3b and structural consequences of its cancer-related mutations.</title>
        <authorList>
            <person name="Cretu C."/>
            <person name="Schmitzova J."/>
            <person name="Ponce-Salvatierra A."/>
            <person name="Dybkov O."/>
            <person name="De Laurentiis E.I."/>
            <person name="Sharma K."/>
            <person name="Will C.L."/>
            <person name="Urlaub H."/>
            <person name="Luehrmann R."/>
            <person name="Pena V."/>
        </authorList>
    </citation>
    <scope>INTERACTION WITH THE SF3B COMPLEX</scope>
</reference>
<reference key="32">
    <citation type="journal article" date="2017" name="Nat. Struct. Mol. Biol.">
        <title>Site-specific mapping of the human SUMO proteome reveals co-modification with phosphorylation.</title>
        <authorList>
            <person name="Hendriks I.A."/>
            <person name="Lyon D."/>
            <person name="Young C."/>
            <person name="Jensen L.J."/>
            <person name="Vertegaal A.C."/>
            <person name="Nielsen M.L."/>
        </authorList>
    </citation>
    <scope>SUMOYLATION [LARGE SCALE ANALYSIS] AT LYS-15 AND LYS-70</scope>
    <scope>IDENTIFICATION BY MASS SPECTROMETRY [LARGE SCALE ANALYSIS]</scope>
</reference>
<reference key="33">
    <citation type="journal article" date="2019" name="Nucleic Acids Res.">
        <title>ARGLU1 is a transcriptional coactivator and splicing regulator important for stress hormone signaling and development.</title>
        <authorList>
            <person name="Magomedova L."/>
            <person name="Tiefenbach J."/>
            <person name="Zilberman E."/>
            <person name="Le Billan F."/>
            <person name="Voisin V."/>
            <person name="Saikali M."/>
            <person name="Boivin V."/>
            <person name="Robitaille M."/>
            <person name="Gueroussov S."/>
            <person name="Irimia M."/>
            <person name="Ray D."/>
            <person name="Patel R."/>
            <person name="Xu C."/>
            <person name="Jeyasuria P."/>
            <person name="Bader G.D."/>
            <person name="Hughes T.R."/>
            <person name="Morris Q.D."/>
            <person name="Scott M.S."/>
            <person name="Krause H."/>
            <person name="Angers S."/>
            <person name="Blencowe B.J."/>
            <person name="Cummins C.L."/>
        </authorList>
    </citation>
    <scope>INTERACTION WITH ARGLU1</scope>
</reference>
<reference key="34">
    <citation type="journal article" date="1999" name="EMBO J.">
        <title>Solution structures of the first and second RNA-binding domains of human U2 small nuclear ribonucleoprotein particle auxiliary factor (U2AF(65)).</title>
        <authorList>
            <person name="Ito T."/>
            <person name="Muto Y."/>
            <person name="Green M.R."/>
            <person name="Yokoyama S."/>
        </authorList>
    </citation>
    <scope>STRUCTURE BY NMR OF 148-237</scope>
</reference>
<reference key="35">
    <citation type="journal article" date="2003" name="Mol. Cell">
        <title>Structural basis for the molecular recognition between human splicing factors U2AF65 and SF1/mBBP.</title>
        <authorList>
            <person name="Selenko P."/>
            <person name="Gregorovic G."/>
            <person name="Sprangers R."/>
            <person name="Stier G."/>
            <person name="Rhani Z."/>
            <person name="Kraemer A."/>
            <person name="Sattler M."/>
        </authorList>
    </citation>
    <scope>STRUCTURE BY NMR OF 372-475 IN COMPLEX WITH SF1</scope>
    <scope>MUTAGENESIS OF 387-GLU-GLU-388; 391-ASP--GLU-393; 396-GLU-GLU-397 AND PHE-454</scope>
</reference>
<reference key="36">
    <citation type="journal article" date="2001" name="Cell">
        <title>A novel peptide recognition mode revealed by the X-ray structure of a core U2AF35/U2AF65 heterodimer.</title>
        <authorList>
            <person name="Kielkopf C.L."/>
            <person name="Rodionova N.A."/>
            <person name="Green M.R."/>
            <person name="Burley S.K."/>
        </authorList>
    </citation>
    <scope>X-RAY CRYSTALLOGRAPHY (2.2 ANGSTROMS) OF 90-112 IN COMPLEX WITH U2AF1</scope>
    <scope>MUTAGENESIS OF TRP-92; PRO-96 AND PRO-104</scope>
</reference>
<reference key="37">
    <citation type="journal article" date="2021" name="J. Hum. Genet.">
        <title>Global developmental delay, systemic dysmorphism and epilepsy in a patient with a de novo U2AF2 variant.</title>
        <authorList>
            <person name="Hiraide T."/>
            <person name="Tanaka T."/>
            <person name="Masunaga Y."/>
            <person name="Ohkubo Y."/>
            <person name="Nakashima M."/>
            <person name="Fukuda T."/>
            <person name="Ogata T."/>
            <person name="Saitsu H."/>
        </authorList>
    </citation>
    <scope>INVOLVEMENT IN DEVDFB</scope>
    <scope>VARIANT DEVDFB TRP-149</scope>
</reference>
<reference key="38">
    <citation type="journal article" date="2023" name="Am. J. Med. Genet. A">
        <title>U2AF2 variant in a patient with developmental delay, dysmorphic features, and epilepsy.</title>
        <authorList>
            <person name="Kittock C.M."/>
            <person name="Saifeddine M."/>
            <person name="Straight L."/>
            <person name="Ward D.I."/>
        </authorList>
    </citation>
    <scope>VARIANT DEVDFB TRP-149</scope>
</reference>
<reference key="39">
    <citation type="journal article" date="2023" name="J. Hum. Genet.">
        <title>A presumed missense variant in the U2AF2 gene causes exon skipping in neurodevelopmental diseases.</title>
        <authorList>
            <person name="Wang X."/>
            <person name="You B."/>
            <person name="Yin F."/>
            <person name="Chen C."/>
            <person name="He H."/>
            <person name="Liu F."/>
            <person name="Pan Z."/>
            <person name="Ni X."/>
            <person name="Pang N."/>
            <person name="Peng J."/>
        </authorList>
    </citation>
    <scope>INVOLVEMENT IN DEVDFB</scope>
</reference>